<dbReference type="EMBL" id="AF134155">
    <property type="protein sequence ID" value="AAD27870.1"/>
    <property type="molecule type" value="mRNA"/>
</dbReference>
<dbReference type="EMBL" id="AL132962">
    <property type="protein sequence ID" value="CAB71076.1"/>
    <property type="molecule type" value="Genomic_DNA"/>
</dbReference>
<dbReference type="EMBL" id="CP002686">
    <property type="protein sequence ID" value="AEE80208.1"/>
    <property type="molecule type" value="Genomic_DNA"/>
</dbReference>
<dbReference type="EMBL" id="AY065300">
    <property type="protein sequence ID" value="AAL38776.1"/>
    <property type="molecule type" value="mRNA"/>
</dbReference>
<dbReference type="EMBL" id="AY117307">
    <property type="protein sequence ID" value="AAM51382.1"/>
    <property type="molecule type" value="mRNA"/>
</dbReference>
<dbReference type="EMBL" id="AY086562">
    <property type="protein sequence ID" value="AAM63625.1"/>
    <property type="molecule type" value="mRNA"/>
</dbReference>
<dbReference type="PIR" id="T47938">
    <property type="entry name" value="T47938"/>
</dbReference>
<dbReference type="RefSeq" id="NP_191705.1">
    <property type="nucleotide sequence ID" value="NM_116011.2"/>
</dbReference>
<dbReference type="SMR" id="Q9XF92"/>
<dbReference type="FunCoup" id="Q9XF92">
    <property type="interactions" value="59"/>
</dbReference>
<dbReference type="IntAct" id="Q9XF92">
    <property type="interactions" value="7"/>
</dbReference>
<dbReference type="STRING" id="3702.Q9XF92"/>
<dbReference type="PaxDb" id="3702-AT3G61460.1"/>
<dbReference type="EnsemblPlants" id="AT3G61460.1">
    <property type="protein sequence ID" value="AT3G61460.1"/>
    <property type="gene ID" value="AT3G61460"/>
</dbReference>
<dbReference type="GeneID" id="825319"/>
<dbReference type="Gramene" id="AT3G61460.1">
    <property type="protein sequence ID" value="AT3G61460.1"/>
    <property type="gene ID" value="AT3G61460"/>
</dbReference>
<dbReference type="KEGG" id="ath:AT3G61460"/>
<dbReference type="Araport" id="AT3G61460"/>
<dbReference type="TAIR" id="AT3G61460">
    <property type="gene designation" value="BRH1"/>
</dbReference>
<dbReference type="eggNOG" id="KOG0800">
    <property type="taxonomic scope" value="Eukaryota"/>
</dbReference>
<dbReference type="HOGENOM" id="CLU_013137_18_2_1"/>
<dbReference type="InParanoid" id="Q9XF92"/>
<dbReference type="OMA" id="MAHDQRT"/>
<dbReference type="OrthoDB" id="8062037at2759"/>
<dbReference type="PhylomeDB" id="Q9XF92"/>
<dbReference type="PRO" id="PR:Q9XF92"/>
<dbReference type="Proteomes" id="UP000006548">
    <property type="component" value="Chromosome 3"/>
</dbReference>
<dbReference type="ExpressionAtlas" id="Q9XF92">
    <property type="expression patterns" value="baseline and differential"/>
</dbReference>
<dbReference type="GO" id="GO:0016020">
    <property type="term" value="C:membrane"/>
    <property type="evidence" value="ECO:0007669"/>
    <property type="project" value="UniProtKB-SubCell"/>
</dbReference>
<dbReference type="GO" id="GO:0008270">
    <property type="term" value="F:zinc ion binding"/>
    <property type="evidence" value="ECO:0007669"/>
    <property type="project" value="UniProtKB-KW"/>
</dbReference>
<dbReference type="GO" id="GO:0009742">
    <property type="term" value="P:brassinosteroid mediated signaling pathway"/>
    <property type="evidence" value="ECO:0000315"/>
    <property type="project" value="UniProtKB"/>
</dbReference>
<dbReference type="GO" id="GO:1901371">
    <property type="term" value="P:regulation of leaf morphogenesis"/>
    <property type="evidence" value="ECO:0000315"/>
    <property type="project" value="UniProtKB"/>
</dbReference>
<dbReference type="GO" id="GO:1905421">
    <property type="term" value="P:regulation of plant organ morphogenesis"/>
    <property type="evidence" value="ECO:0000315"/>
    <property type="project" value="UniProtKB"/>
</dbReference>
<dbReference type="GO" id="GO:0009741">
    <property type="term" value="P:response to brassinosteroid"/>
    <property type="evidence" value="ECO:0000270"/>
    <property type="project" value="UniProtKB"/>
</dbReference>
<dbReference type="GO" id="GO:0010200">
    <property type="term" value="P:response to chitin"/>
    <property type="evidence" value="ECO:0000270"/>
    <property type="project" value="TAIR"/>
</dbReference>
<dbReference type="FunFam" id="3.30.40.10:FF:000497">
    <property type="entry name" value="RING-H2 finger protein ATL73"/>
    <property type="match status" value="1"/>
</dbReference>
<dbReference type="Gene3D" id="3.30.40.10">
    <property type="entry name" value="Zinc/RING finger domain, C3HC4 (zinc finger)"/>
    <property type="match status" value="1"/>
</dbReference>
<dbReference type="InterPro" id="IPR001841">
    <property type="entry name" value="Znf_RING"/>
</dbReference>
<dbReference type="InterPro" id="IPR011016">
    <property type="entry name" value="Znf_RING-CH"/>
</dbReference>
<dbReference type="InterPro" id="IPR013083">
    <property type="entry name" value="Znf_RING/FYVE/PHD"/>
</dbReference>
<dbReference type="PANTHER" id="PTHR45969:SF10">
    <property type="entry name" value="BRASSINOSTEROID-RESPONSIVE RING PROTEIN 1"/>
    <property type="match status" value="1"/>
</dbReference>
<dbReference type="PANTHER" id="PTHR45969">
    <property type="entry name" value="RING ZINC FINGER PROTEIN-RELATED"/>
    <property type="match status" value="1"/>
</dbReference>
<dbReference type="Pfam" id="PF13639">
    <property type="entry name" value="zf-RING_2"/>
    <property type="match status" value="1"/>
</dbReference>
<dbReference type="SMART" id="SM00184">
    <property type="entry name" value="RING"/>
    <property type="match status" value="1"/>
</dbReference>
<dbReference type="SMART" id="SM00744">
    <property type="entry name" value="RINGv"/>
    <property type="match status" value="1"/>
</dbReference>
<dbReference type="SUPFAM" id="SSF57850">
    <property type="entry name" value="RING/U-box"/>
    <property type="match status" value="1"/>
</dbReference>
<dbReference type="PROSITE" id="PS50089">
    <property type="entry name" value="ZF_RING_2"/>
    <property type="match status" value="1"/>
</dbReference>
<feature type="chain" id="PRO_0000449047" description="Brassinosteroid-responsive RING protein 1">
    <location>
        <begin position="1"/>
        <end position="170"/>
    </location>
</feature>
<feature type="transmembrane region" description="Helical" evidence="1">
    <location>
        <begin position="15"/>
        <end position="37"/>
    </location>
</feature>
<feature type="zinc finger region" description="RING-type; atypical" evidence="2">
    <location>
        <begin position="94"/>
        <end position="137"/>
    </location>
</feature>
<sequence>MGFPVGYTEVFLPKLFVQTLSILGFIRTIVFSIFRFLGLSDFLEMDQTWPDYTSYPTRIPETRSPFSALLIREILPVIKFEELTNSGEDLPENCAVCLYEFEGEQEIRWLRNCRHIFHRSCLDRWMDHDQKTCPLCRTPFVPDEMQEEFNQRLWAASGVHDFHCPVTELL</sequence>
<proteinExistence type="evidence at transcript level"/>
<accession>Q9XF92</accession>
<accession>A0A178VCF4</accession>
<comment type="function">
    <text evidence="3 4">May be involved in the brassinosteroids (BRs) signaling pathway and regulate the growth and development of rosette leaves (PubMed:28887625). Seems to prevent over development of leaves and inflorescence stems (PubMed:12012249).</text>
</comment>
<comment type="subcellular location">
    <subcellularLocation>
        <location evidence="1">Membrane</location>
        <topology evidence="1">Single-pass membrane protein</topology>
    </subcellularLocation>
</comment>
<comment type="tissue specificity">
    <text evidence="4">Highly expressed in stems, rosette leaves and siliques, and moderately expressed in roots, cauline leaves and flower (PubMed:28887625). Detected at low levels in seeds (PubMed:28887625).</text>
</comment>
<comment type="induction">
    <text evidence="3">Repressed by brassinosteroids (BRs) such as brassinolide and 24-epi-brassinolide in a BRI1-dependent manner (PubMed:12012249). Induced rapidly but transiently induced by chitin, a fungal pathogen elicitor (PubMed:12012249).</text>
</comment>
<comment type="disruption phenotype">
    <text evidence="3 4">Vigorous plants with thick inflorescence stems and enlarged leaves; more rounded tip in rosette leaves and more serrated cauline leaves.</text>
</comment>
<comment type="similarity">
    <text evidence="6">Belongs to the RING-type zinc finger family.</text>
</comment>
<evidence type="ECO:0000255" key="1"/>
<evidence type="ECO:0000255" key="2">
    <source>
        <dbReference type="PROSITE-ProRule" id="PRU00175"/>
    </source>
</evidence>
<evidence type="ECO:0000269" key="3">
    <source>
    </source>
</evidence>
<evidence type="ECO:0000269" key="4">
    <source>
    </source>
</evidence>
<evidence type="ECO:0000303" key="5">
    <source>
    </source>
</evidence>
<evidence type="ECO:0000305" key="6"/>
<evidence type="ECO:0000312" key="7">
    <source>
        <dbReference type="Araport" id="AT3G61460"/>
    </source>
</evidence>
<evidence type="ECO:0000312" key="8">
    <source>
        <dbReference type="EMBL" id="CAB71076.1"/>
    </source>
</evidence>
<reference key="1">
    <citation type="journal article" date="2002" name="Planta">
        <title>Characterisation of BRH1, a brassinosteroid-responsive RING-H2 gene from Arabidopsis thaliana.</title>
        <authorList>
            <person name="Molnar G."/>
            <person name="Bancos S."/>
            <person name="Nagy F."/>
            <person name="Szekeres M."/>
        </authorList>
    </citation>
    <scope>NUCLEOTIDE SEQUENCE [MRNA]</scope>
    <scope>FUNCTION</scope>
    <scope>DISRUPTION PHENOTYPE</scope>
    <scope>INDUCTION BY BRASSINOSTEROIDS</scope>
    <source>
        <strain>cv. Columbia</strain>
    </source>
</reference>
<reference key="2">
    <citation type="journal article" date="2000" name="Nature">
        <title>Sequence and analysis of chromosome 3 of the plant Arabidopsis thaliana.</title>
        <authorList>
            <person name="Salanoubat M."/>
            <person name="Lemcke K."/>
            <person name="Rieger M."/>
            <person name="Ansorge W."/>
            <person name="Unseld M."/>
            <person name="Fartmann B."/>
            <person name="Valle G."/>
            <person name="Bloecker H."/>
            <person name="Perez-Alonso M."/>
            <person name="Obermaier B."/>
            <person name="Delseny M."/>
            <person name="Boutry M."/>
            <person name="Grivell L.A."/>
            <person name="Mache R."/>
            <person name="Puigdomenech P."/>
            <person name="De Simone V."/>
            <person name="Choisne N."/>
            <person name="Artiguenave F."/>
            <person name="Robert C."/>
            <person name="Brottier P."/>
            <person name="Wincker P."/>
            <person name="Cattolico L."/>
            <person name="Weissenbach J."/>
            <person name="Saurin W."/>
            <person name="Quetier F."/>
            <person name="Schaefer M."/>
            <person name="Mueller-Auer S."/>
            <person name="Gabel C."/>
            <person name="Fuchs M."/>
            <person name="Benes V."/>
            <person name="Wurmbach E."/>
            <person name="Drzonek H."/>
            <person name="Erfle H."/>
            <person name="Jordan N."/>
            <person name="Bangert S."/>
            <person name="Wiedelmann R."/>
            <person name="Kranz H."/>
            <person name="Voss H."/>
            <person name="Holland R."/>
            <person name="Brandt P."/>
            <person name="Nyakatura G."/>
            <person name="Vezzi A."/>
            <person name="D'Angelo M."/>
            <person name="Pallavicini A."/>
            <person name="Toppo S."/>
            <person name="Simionati B."/>
            <person name="Conrad A."/>
            <person name="Hornischer K."/>
            <person name="Kauer G."/>
            <person name="Loehnert T.-H."/>
            <person name="Nordsiek G."/>
            <person name="Reichelt J."/>
            <person name="Scharfe M."/>
            <person name="Schoen O."/>
            <person name="Bargues M."/>
            <person name="Terol J."/>
            <person name="Climent J."/>
            <person name="Navarro P."/>
            <person name="Collado C."/>
            <person name="Perez-Perez A."/>
            <person name="Ottenwaelder B."/>
            <person name="Duchemin D."/>
            <person name="Cooke R."/>
            <person name="Laudie M."/>
            <person name="Berger-Llauro C."/>
            <person name="Purnelle B."/>
            <person name="Masuy D."/>
            <person name="de Haan M."/>
            <person name="Maarse A.C."/>
            <person name="Alcaraz J.-P."/>
            <person name="Cottet A."/>
            <person name="Casacuberta E."/>
            <person name="Monfort A."/>
            <person name="Argiriou A."/>
            <person name="Flores M."/>
            <person name="Liguori R."/>
            <person name="Vitale D."/>
            <person name="Mannhaupt G."/>
            <person name="Haase D."/>
            <person name="Schoof H."/>
            <person name="Rudd S."/>
            <person name="Zaccaria P."/>
            <person name="Mewes H.-W."/>
            <person name="Mayer K.F.X."/>
            <person name="Kaul S."/>
            <person name="Town C.D."/>
            <person name="Koo H.L."/>
            <person name="Tallon L.J."/>
            <person name="Jenkins J."/>
            <person name="Rooney T."/>
            <person name="Rizzo M."/>
            <person name="Walts A."/>
            <person name="Utterback T."/>
            <person name="Fujii C.Y."/>
            <person name="Shea T.P."/>
            <person name="Creasy T.H."/>
            <person name="Haas B."/>
            <person name="Maiti R."/>
            <person name="Wu D."/>
            <person name="Peterson J."/>
            <person name="Van Aken S."/>
            <person name="Pai G."/>
            <person name="Militscher J."/>
            <person name="Sellers P."/>
            <person name="Gill J.E."/>
            <person name="Feldblyum T.V."/>
            <person name="Preuss D."/>
            <person name="Lin X."/>
            <person name="Nierman W.C."/>
            <person name="Salzberg S.L."/>
            <person name="White O."/>
            <person name="Venter J.C."/>
            <person name="Fraser C.M."/>
            <person name="Kaneko T."/>
            <person name="Nakamura Y."/>
            <person name="Sato S."/>
            <person name="Kato T."/>
            <person name="Asamizu E."/>
            <person name="Sasamoto S."/>
            <person name="Kimura T."/>
            <person name="Idesawa K."/>
            <person name="Kawashima K."/>
            <person name="Kishida Y."/>
            <person name="Kiyokawa C."/>
            <person name="Kohara M."/>
            <person name="Matsumoto M."/>
            <person name="Matsuno A."/>
            <person name="Muraki A."/>
            <person name="Nakayama S."/>
            <person name="Nakazaki N."/>
            <person name="Shinpo S."/>
            <person name="Takeuchi C."/>
            <person name="Wada T."/>
            <person name="Watanabe A."/>
            <person name="Yamada M."/>
            <person name="Yasuda M."/>
            <person name="Tabata S."/>
        </authorList>
    </citation>
    <scope>NUCLEOTIDE SEQUENCE [LARGE SCALE GENOMIC DNA]</scope>
    <source>
        <strain>cv. Columbia</strain>
    </source>
</reference>
<reference key="3">
    <citation type="journal article" date="2017" name="Plant J.">
        <title>Araport11: a complete reannotation of the Arabidopsis thaliana reference genome.</title>
        <authorList>
            <person name="Cheng C.Y."/>
            <person name="Krishnakumar V."/>
            <person name="Chan A.P."/>
            <person name="Thibaud-Nissen F."/>
            <person name="Schobel S."/>
            <person name="Town C.D."/>
        </authorList>
    </citation>
    <scope>GENOME REANNOTATION</scope>
    <source>
        <strain>cv. Columbia</strain>
    </source>
</reference>
<reference key="4">
    <citation type="journal article" date="2003" name="Science">
        <title>Empirical analysis of transcriptional activity in the Arabidopsis genome.</title>
        <authorList>
            <person name="Yamada K."/>
            <person name="Lim J."/>
            <person name="Dale J.M."/>
            <person name="Chen H."/>
            <person name="Shinn P."/>
            <person name="Palm C.J."/>
            <person name="Southwick A.M."/>
            <person name="Wu H.C."/>
            <person name="Kim C.J."/>
            <person name="Nguyen M."/>
            <person name="Pham P.K."/>
            <person name="Cheuk R.F."/>
            <person name="Karlin-Newmann G."/>
            <person name="Liu S.X."/>
            <person name="Lam B."/>
            <person name="Sakano H."/>
            <person name="Wu T."/>
            <person name="Yu G."/>
            <person name="Miranda M."/>
            <person name="Quach H.L."/>
            <person name="Tripp M."/>
            <person name="Chang C.H."/>
            <person name="Lee J.M."/>
            <person name="Toriumi M.J."/>
            <person name="Chan M.M."/>
            <person name="Tang C.C."/>
            <person name="Onodera C.S."/>
            <person name="Deng J.M."/>
            <person name="Akiyama K."/>
            <person name="Ansari Y."/>
            <person name="Arakawa T."/>
            <person name="Banh J."/>
            <person name="Banno F."/>
            <person name="Bowser L."/>
            <person name="Brooks S.Y."/>
            <person name="Carninci P."/>
            <person name="Chao Q."/>
            <person name="Choy N."/>
            <person name="Enju A."/>
            <person name="Goldsmith A.D."/>
            <person name="Gurjal M."/>
            <person name="Hansen N.F."/>
            <person name="Hayashizaki Y."/>
            <person name="Johnson-Hopson C."/>
            <person name="Hsuan V.W."/>
            <person name="Iida K."/>
            <person name="Karnes M."/>
            <person name="Khan S."/>
            <person name="Koesema E."/>
            <person name="Ishida J."/>
            <person name="Jiang P.X."/>
            <person name="Jones T."/>
            <person name="Kawai J."/>
            <person name="Kamiya A."/>
            <person name="Meyers C."/>
            <person name="Nakajima M."/>
            <person name="Narusaka M."/>
            <person name="Seki M."/>
            <person name="Sakurai T."/>
            <person name="Satou M."/>
            <person name="Tamse R."/>
            <person name="Vaysberg M."/>
            <person name="Wallender E.K."/>
            <person name="Wong C."/>
            <person name="Yamamura Y."/>
            <person name="Yuan S."/>
            <person name="Shinozaki K."/>
            <person name="Davis R.W."/>
            <person name="Theologis A."/>
            <person name="Ecker J.R."/>
        </authorList>
    </citation>
    <scope>NUCLEOTIDE SEQUENCE [LARGE SCALE MRNA]</scope>
    <source>
        <strain>cv. Columbia</strain>
    </source>
</reference>
<reference key="5">
    <citation type="submission" date="2002-03" db="EMBL/GenBank/DDBJ databases">
        <title>Full-length cDNA from Arabidopsis thaliana.</title>
        <authorList>
            <person name="Brover V.V."/>
            <person name="Troukhan M.E."/>
            <person name="Alexandrov N.A."/>
            <person name="Lu Y.-P."/>
            <person name="Flavell R.B."/>
            <person name="Feldmann K.A."/>
        </authorList>
    </citation>
    <scope>NUCLEOTIDE SEQUENCE [LARGE SCALE MRNA]</scope>
</reference>
<reference key="6">
    <citation type="journal article" date="2002" name="Genome Biol.">
        <title>Evaluation and classification of RING-finger domains encoded by the Arabidopsis genome.</title>
        <authorList>
            <person name="Kosarev P."/>
            <person name="Mayer K.F.X."/>
            <person name="Hardtke C.S."/>
        </authorList>
    </citation>
    <scope>GENE FAMILY</scope>
</reference>
<reference key="7">
    <citation type="journal article" date="2018" name="Sci. China Life Sci.">
        <title>Overexpressed BRH1, a RING finger gene, alters rosette leaf shape in Arabidopsis thaliana.</title>
        <authorList>
            <person name="Wang X."/>
            <person name="Chen E."/>
            <person name="Ge X."/>
            <person name="Gong Q."/>
            <person name="Butt H."/>
            <person name="Zhang C."/>
            <person name="Yang Z."/>
            <person name="Li F."/>
            <person name="Zhang X."/>
        </authorList>
    </citation>
    <scope>FUNCTION</scope>
    <scope>DISRUPTION PHENOTYPE</scope>
    <scope>INDUCTION BY BRASSINOSTEROIDS</scope>
    <scope>TISSUE SPECIFICITY</scope>
    <source>
        <strain>cv. Columbia</strain>
    </source>
</reference>
<protein>
    <recommendedName>
        <fullName evidence="5">Brassinosteroid-responsive RING protein 1</fullName>
    </recommendedName>
</protein>
<name>BRH1_ARATH</name>
<organism>
    <name type="scientific">Arabidopsis thaliana</name>
    <name type="common">Mouse-ear cress</name>
    <dbReference type="NCBI Taxonomy" id="3702"/>
    <lineage>
        <taxon>Eukaryota</taxon>
        <taxon>Viridiplantae</taxon>
        <taxon>Streptophyta</taxon>
        <taxon>Embryophyta</taxon>
        <taxon>Tracheophyta</taxon>
        <taxon>Spermatophyta</taxon>
        <taxon>Magnoliopsida</taxon>
        <taxon>eudicotyledons</taxon>
        <taxon>Gunneridae</taxon>
        <taxon>Pentapetalae</taxon>
        <taxon>rosids</taxon>
        <taxon>malvids</taxon>
        <taxon>Brassicales</taxon>
        <taxon>Brassicaceae</taxon>
        <taxon>Camelineae</taxon>
        <taxon>Arabidopsis</taxon>
    </lineage>
</organism>
<gene>
    <name evidence="5" type="primary">BRH1</name>
    <name evidence="7" type="ordered locus">At3g61460</name>
    <name evidence="8" type="ORF">F2A19.60</name>
</gene>
<keyword id="KW-1070">Brassinosteroid signaling pathway</keyword>
<keyword id="KW-0217">Developmental protein</keyword>
<keyword id="KW-0472">Membrane</keyword>
<keyword id="KW-0479">Metal-binding</keyword>
<keyword id="KW-1185">Reference proteome</keyword>
<keyword id="KW-0812">Transmembrane</keyword>
<keyword id="KW-1133">Transmembrane helix</keyword>
<keyword id="KW-0862">Zinc</keyword>
<keyword id="KW-0863">Zinc-finger</keyword>